<reference key="1">
    <citation type="journal article" date="2004" name="Plant J.">
        <title>The Arabidopsis COW1 gene encodes a phosphatidylinositol transfer protein essential for root hair tip growth.</title>
        <authorList>
            <person name="Bohme K."/>
            <person name="Li Y."/>
            <person name="Charlot F."/>
            <person name="Grierson C."/>
            <person name="Marrocco K."/>
            <person name="Okada K."/>
            <person name="Laloue M."/>
            <person name="Nogue F."/>
        </authorList>
    </citation>
    <scope>NUCLEOTIDE SEQUENCE [GENOMIC DNA / MRNA]</scope>
    <scope>DISRUPTION PHENOTYPE</scope>
    <scope>FUNCTION</scope>
    <scope>TISSUE SPECIFICITY</scope>
    <source>
        <strain>cv. Columbia</strain>
    </source>
</reference>
<reference key="2">
    <citation type="journal article" date="1999" name="Nature">
        <title>Sequence and analysis of chromosome 4 of the plant Arabidopsis thaliana.</title>
        <authorList>
            <person name="Mayer K.F.X."/>
            <person name="Schueller C."/>
            <person name="Wambutt R."/>
            <person name="Murphy G."/>
            <person name="Volckaert G."/>
            <person name="Pohl T."/>
            <person name="Duesterhoeft A."/>
            <person name="Stiekema W."/>
            <person name="Entian K.-D."/>
            <person name="Terryn N."/>
            <person name="Harris B."/>
            <person name="Ansorge W."/>
            <person name="Brandt P."/>
            <person name="Grivell L.A."/>
            <person name="Rieger M."/>
            <person name="Weichselgartner M."/>
            <person name="de Simone V."/>
            <person name="Obermaier B."/>
            <person name="Mache R."/>
            <person name="Mueller M."/>
            <person name="Kreis M."/>
            <person name="Delseny M."/>
            <person name="Puigdomenech P."/>
            <person name="Watson M."/>
            <person name="Schmidtheini T."/>
            <person name="Reichert B."/>
            <person name="Portetelle D."/>
            <person name="Perez-Alonso M."/>
            <person name="Boutry M."/>
            <person name="Bancroft I."/>
            <person name="Vos P."/>
            <person name="Hoheisel J."/>
            <person name="Zimmermann W."/>
            <person name="Wedler H."/>
            <person name="Ridley P."/>
            <person name="Langham S.-A."/>
            <person name="McCullagh B."/>
            <person name="Bilham L."/>
            <person name="Robben J."/>
            <person name="van der Schueren J."/>
            <person name="Grymonprez B."/>
            <person name="Chuang Y.-J."/>
            <person name="Vandenbussche F."/>
            <person name="Braeken M."/>
            <person name="Weltjens I."/>
            <person name="Voet M."/>
            <person name="Bastiaens I."/>
            <person name="Aert R."/>
            <person name="Defoor E."/>
            <person name="Weitzenegger T."/>
            <person name="Bothe G."/>
            <person name="Ramsperger U."/>
            <person name="Hilbert H."/>
            <person name="Braun M."/>
            <person name="Holzer E."/>
            <person name="Brandt A."/>
            <person name="Peters S."/>
            <person name="van Staveren M."/>
            <person name="Dirkse W."/>
            <person name="Mooijman P."/>
            <person name="Klein Lankhorst R."/>
            <person name="Rose M."/>
            <person name="Hauf J."/>
            <person name="Koetter P."/>
            <person name="Berneiser S."/>
            <person name="Hempel S."/>
            <person name="Feldpausch M."/>
            <person name="Lamberth S."/>
            <person name="Van den Daele H."/>
            <person name="De Keyser A."/>
            <person name="Buysshaert C."/>
            <person name="Gielen J."/>
            <person name="Villarroel R."/>
            <person name="De Clercq R."/>
            <person name="van Montagu M."/>
            <person name="Rogers J."/>
            <person name="Cronin A."/>
            <person name="Quail M.A."/>
            <person name="Bray-Allen S."/>
            <person name="Clark L."/>
            <person name="Doggett J."/>
            <person name="Hall S."/>
            <person name="Kay M."/>
            <person name="Lennard N."/>
            <person name="McLay K."/>
            <person name="Mayes R."/>
            <person name="Pettett A."/>
            <person name="Rajandream M.A."/>
            <person name="Lyne M."/>
            <person name="Benes V."/>
            <person name="Rechmann S."/>
            <person name="Borkova D."/>
            <person name="Bloecker H."/>
            <person name="Scharfe M."/>
            <person name="Grimm M."/>
            <person name="Loehnert T.-H."/>
            <person name="Dose S."/>
            <person name="de Haan M."/>
            <person name="Maarse A.C."/>
            <person name="Schaefer M."/>
            <person name="Mueller-Auer S."/>
            <person name="Gabel C."/>
            <person name="Fuchs M."/>
            <person name="Fartmann B."/>
            <person name="Granderath K."/>
            <person name="Dauner D."/>
            <person name="Herzl A."/>
            <person name="Neumann S."/>
            <person name="Argiriou A."/>
            <person name="Vitale D."/>
            <person name="Liguori R."/>
            <person name="Piravandi E."/>
            <person name="Massenet O."/>
            <person name="Quigley F."/>
            <person name="Clabauld G."/>
            <person name="Muendlein A."/>
            <person name="Felber R."/>
            <person name="Schnabl S."/>
            <person name="Hiller R."/>
            <person name="Schmidt W."/>
            <person name="Lecharny A."/>
            <person name="Aubourg S."/>
            <person name="Chefdor F."/>
            <person name="Cooke R."/>
            <person name="Berger C."/>
            <person name="Monfort A."/>
            <person name="Casacuberta E."/>
            <person name="Gibbons T."/>
            <person name="Weber N."/>
            <person name="Vandenbol M."/>
            <person name="Bargues M."/>
            <person name="Terol J."/>
            <person name="Torres A."/>
            <person name="Perez-Perez A."/>
            <person name="Purnelle B."/>
            <person name="Bent E."/>
            <person name="Johnson S."/>
            <person name="Tacon D."/>
            <person name="Jesse T."/>
            <person name="Heijnen L."/>
            <person name="Schwarz S."/>
            <person name="Scholler P."/>
            <person name="Heber S."/>
            <person name="Francs P."/>
            <person name="Bielke C."/>
            <person name="Frishman D."/>
            <person name="Haase D."/>
            <person name="Lemcke K."/>
            <person name="Mewes H.-W."/>
            <person name="Stocker S."/>
            <person name="Zaccaria P."/>
            <person name="Bevan M."/>
            <person name="Wilson R.K."/>
            <person name="de la Bastide M."/>
            <person name="Habermann K."/>
            <person name="Parnell L."/>
            <person name="Dedhia N."/>
            <person name="Gnoj L."/>
            <person name="Schutz K."/>
            <person name="Huang E."/>
            <person name="Spiegel L."/>
            <person name="Sekhon M."/>
            <person name="Murray J."/>
            <person name="Sheet P."/>
            <person name="Cordes M."/>
            <person name="Abu-Threideh J."/>
            <person name="Stoneking T."/>
            <person name="Kalicki J."/>
            <person name="Graves T."/>
            <person name="Harmon G."/>
            <person name="Edwards J."/>
            <person name="Latreille P."/>
            <person name="Courtney L."/>
            <person name="Cloud J."/>
            <person name="Abbott A."/>
            <person name="Scott K."/>
            <person name="Johnson D."/>
            <person name="Minx P."/>
            <person name="Bentley D."/>
            <person name="Fulton B."/>
            <person name="Miller N."/>
            <person name="Greco T."/>
            <person name="Kemp K."/>
            <person name="Kramer J."/>
            <person name="Fulton L."/>
            <person name="Mardis E."/>
            <person name="Dante M."/>
            <person name="Pepin K."/>
            <person name="Hillier L.W."/>
            <person name="Nelson J."/>
            <person name="Spieth J."/>
            <person name="Ryan E."/>
            <person name="Andrews S."/>
            <person name="Geisel C."/>
            <person name="Layman D."/>
            <person name="Du H."/>
            <person name="Ali J."/>
            <person name="Berghoff A."/>
            <person name="Jones K."/>
            <person name="Drone K."/>
            <person name="Cotton M."/>
            <person name="Joshu C."/>
            <person name="Antonoiu B."/>
            <person name="Zidanic M."/>
            <person name="Strong C."/>
            <person name="Sun H."/>
            <person name="Lamar B."/>
            <person name="Yordan C."/>
            <person name="Ma P."/>
            <person name="Zhong J."/>
            <person name="Preston R."/>
            <person name="Vil D."/>
            <person name="Shekher M."/>
            <person name="Matero A."/>
            <person name="Shah R."/>
            <person name="Swaby I.K."/>
            <person name="O'Shaughnessy A."/>
            <person name="Rodriguez M."/>
            <person name="Hoffman J."/>
            <person name="Till S."/>
            <person name="Granat S."/>
            <person name="Shohdy N."/>
            <person name="Hasegawa A."/>
            <person name="Hameed A."/>
            <person name="Lodhi M."/>
            <person name="Johnson A."/>
            <person name="Chen E."/>
            <person name="Marra M.A."/>
            <person name="Martienssen R."/>
            <person name="McCombie W.R."/>
        </authorList>
    </citation>
    <scope>NUCLEOTIDE SEQUENCE [LARGE SCALE GENOMIC DNA]</scope>
    <source>
        <strain>cv. Columbia</strain>
    </source>
</reference>
<reference key="3">
    <citation type="journal article" date="2017" name="Plant J.">
        <title>Araport11: a complete reannotation of the Arabidopsis thaliana reference genome.</title>
        <authorList>
            <person name="Cheng C.Y."/>
            <person name="Krishnakumar V."/>
            <person name="Chan A.P."/>
            <person name="Thibaud-Nissen F."/>
            <person name="Schobel S."/>
            <person name="Town C.D."/>
        </authorList>
    </citation>
    <scope>GENOME REANNOTATION</scope>
    <source>
        <strain>cv. Columbia</strain>
    </source>
</reference>
<reference key="4">
    <citation type="journal article" date="1997" name="Plant Physiol.">
        <title>The COW1 locus of arabidopsis acts after RHD2, and in parallel with RHD3 and TIP1, to determine the shape, rate of elongation, and number of root hairs produced from each site of hair formation.</title>
        <authorList>
            <person name="Grierson C.S."/>
            <person name="Roberts K."/>
            <person name="Feldmann K.A."/>
            <person name="Dolan L."/>
        </authorList>
    </citation>
    <scope>MUTANT COW1</scope>
    <scope>FUNCTION</scope>
    <scope>DISRUPTION PHENOTYPE</scope>
</reference>
<reference key="5">
    <citation type="journal article" date="2005" name="J. Cell Biol.">
        <title>A Sec14p-nodulin domain phosphatidylinositol transfer protein polarizes membrane growth of Arabidopsis thaliana root hairs.</title>
        <authorList>
            <person name="Vincent P."/>
            <person name="Chua M."/>
            <person name="Nogue F."/>
            <person name="Fairbrother A."/>
            <person name="Mekeel H."/>
            <person name="Xu Y."/>
            <person name="Allen N."/>
            <person name="Bibikova T.N."/>
            <person name="Gilroy S."/>
            <person name="Bankaitis V.A."/>
        </authorList>
    </citation>
    <scope>GENE FAMILY</scope>
    <scope>DISRUPTION PHENOTYPE</scope>
    <scope>FUNCTION</scope>
    <scope>TISSUE SPECIFICITY</scope>
    <scope>SUBCELLULAR LOCATION</scope>
</reference>
<reference key="6">
    <citation type="journal article" date="2006" name="Nat. Chem. Biol.">
        <title>Phosphatidylinositol transfer proteins and cellular nanoreactors for lipid signaling.</title>
        <authorList>
            <person name="Ile K.E."/>
            <person name="Schaaf G."/>
            <person name="Bankaitis V.A."/>
        </authorList>
    </citation>
    <scope>REVIEW</scope>
</reference>
<reference key="7">
    <citation type="journal article" date="2007" name="Adv. Enzyme Regul.">
        <title>Phosphatidylinositol transfer proteins and functional specification of lipid signaling pools.</title>
        <authorList>
            <person name="Bankaitis V.A."/>
            <person name="Vincent P."/>
            <person name="Merkulova M."/>
            <person name="Tyeryar K."/>
            <person name="Liu Y."/>
        </authorList>
    </citation>
    <scope>REVIEW</scope>
    <scope>FUNCTION</scope>
</reference>
<reference key="8">
    <citation type="journal article" date="2013" name="Plant Mol. Biol.">
        <title>OsSNDP1, a Sec14-nodulin domain-containing protein, plays a critical role in root hair elongation in rice.</title>
        <authorList>
            <person name="Huang J."/>
            <person name="Kim C.M."/>
            <person name="Xuan Y.H."/>
            <person name="Park S.J."/>
            <person name="Piao H.L."/>
            <person name="Je B.I."/>
            <person name="Liu J."/>
            <person name="Kim T.H."/>
            <person name="Kim B.K."/>
            <person name="Han C.D."/>
        </authorList>
    </citation>
    <scope>DISRUPTION PHENOTYPE</scope>
    <scope>FUNCTION</scope>
</reference>
<evidence type="ECO:0000250" key="1"/>
<evidence type="ECO:0000255" key="2"/>
<evidence type="ECO:0000255" key="3">
    <source>
        <dbReference type="PROSITE-ProRule" id="PRU00056"/>
    </source>
</evidence>
<evidence type="ECO:0000269" key="4">
    <source>
    </source>
</evidence>
<evidence type="ECO:0000269" key="5">
    <source>
    </source>
</evidence>
<evidence type="ECO:0000269" key="6">
    <source>
    </source>
</evidence>
<evidence type="ECO:0000269" key="7">
    <source>
    </source>
</evidence>
<evidence type="ECO:0000269" key="8">
    <source>
    </source>
</evidence>
<evidence type="ECO:0000305" key="9"/>
<organism>
    <name type="scientific">Arabidopsis thaliana</name>
    <name type="common">Mouse-ear cress</name>
    <dbReference type="NCBI Taxonomy" id="3702"/>
    <lineage>
        <taxon>Eukaryota</taxon>
        <taxon>Viridiplantae</taxon>
        <taxon>Streptophyta</taxon>
        <taxon>Embryophyta</taxon>
        <taxon>Tracheophyta</taxon>
        <taxon>Spermatophyta</taxon>
        <taxon>Magnoliopsida</taxon>
        <taxon>eudicotyledons</taxon>
        <taxon>Gunneridae</taxon>
        <taxon>Pentapetalae</taxon>
        <taxon>rosids</taxon>
        <taxon>malvids</taxon>
        <taxon>Brassicales</taxon>
        <taxon>Brassicaceae</taxon>
        <taxon>Camelineae</taxon>
        <taxon>Arabidopsis</taxon>
    </lineage>
</organism>
<keyword id="KW-1003">Cell membrane</keyword>
<keyword id="KW-0175">Coiled coil</keyword>
<keyword id="KW-0333">Golgi apparatus</keyword>
<keyword id="KW-0472">Membrane</keyword>
<keyword id="KW-0653">Protein transport</keyword>
<keyword id="KW-1185">Reference proteome</keyword>
<keyword id="KW-0813">Transport</keyword>
<comment type="function">
    <text evidence="1 4 5 6 7 8">Required for transport of secretory proteins from the Golgi complex (By similarity). Catalyzes the transfer of phosphatidylinositol and phosphatidylcholine between membranes in vitro. Plays a role in root hair tip elongation as a key regulator of polarized membrane trafficking. May promote the PtdIns(4,5)P2 synthesis and organization in root hair membrane.</text>
</comment>
<comment type="subcellular location">
    <subcellularLocation>
        <location evidence="1">Golgi apparatus membrane</location>
        <topology evidence="1">Peripheral membrane protein</topology>
    </subcellularLocation>
    <subcellularLocation>
        <location evidence="5">Cell membrane</location>
        <topology evidence="5">Peripheral membrane protein</topology>
    </subcellularLocation>
</comment>
<comment type="tissue specificity">
    <text evidence="4 5">Predominantly expressed in roots. Detected solely in root trichoblast cell files engaged in root hair growth, hydathodes, shoot apical meristem, and apical cells of the root cap.</text>
</comment>
<comment type="disruption phenotype">
    <text evidence="4 5 7 8">Exhibits short branched root hairs.</text>
</comment>
<comment type="similarity">
    <text evidence="9">Belongs to the SFH family.</text>
</comment>
<comment type="sequence caution" evidence="9">
    <conflict type="erroneous gene model prediction">
        <sequence resource="EMBL-CDS" id="CAA18837"/>
    </conflict>
</comment>
<comment type="sequence caution" evidence="9">
    <conflict type="erroneous gene model prediction">
        <sequence resource="EMBL-CDS" id="CAB80175"/>
    </conflict>
</comment>
<comment type="sequence caution" evidence="9">
    <conflict type="frameshift">
        <sequence resource="EMBL-CDS" id="CAE82296"/>
    </conflict>
</comment>
<comment type="sequence caution" evidence="9">
    <conflict type="erroneous gene model prediction">
        <sequence resource="EMBL-CDS" id="CAE82297"/>
    </conflict>
</comment>
<name>SFH1_ARATH</name>
<feature type="chain" id="PRO_0000423461" description="Phosphatidylinositol/phosphatidylcholine transfer protein SFH1">
    <location>
        <begin position="1"/>
        <end position="554"/>
    </location>
</feature>
<feature type="domain" description="CRAL-TRIO" evidence="3">
    <location>
        <begin position="130"/>
        <end position="304"/>
    </location>
</feature>
<feature type="coiled-coil region" evidence="2">
    <location>
        <begin position="498"/>
        <end position="539"/>
    </location>
</feature>
<protein>
    <recommendedName>
        <fullName>Phosphatidylinositol/phosphatidylcholine transfer protein SFH1</fullName>
    </recommendedName>
    <alternativeName>
        <fullName>Phosphatidylinositol transfer protein 1</fullName>
        <shortName>AtPITP1</shortName>
    </alternativeName>
    <alternativeName>
        <fullName>Protein CAN OF WORMS1</fullName>
    </alternativeName>
    <alternativeName>
        <fullName>Protein SEC FOURTEEN HOMOLOGS 1</fullName>
        <shortName>AtSFH1</shortName>
    </alternativeName>
    <alternativeName>
        <fullName>Protein SHORT ROOT HAIR 1</fullName>
    </alternativeName>
</protein>
<accession>F4JLE5</accession>
<accession>O65682</accession>
<accession>Q708J3</accession>
<gene>
    <name type="primary">SFH1</name>
    <name type="synonym">COW1</name>
    <name type="synonym">PITP1</name>
    <name type="synonym">SRH1</name>
    <name type="ordered locus">At4g34580</name>
    <name type="ORF">T4L20.160</name>
</gene>
<sequence length="554" mass="63287">MAETKPEIEMSEEERKIVKISSLKKKAINASNRFKNSFKKKGRRSSSRVMSVPIEDDIDAEDLQALDAFRQALILDELLPSKLDDLHMMLRFLRARKFDIEKAKQMWSDMIQWRKDFGADTIIEDFDFEEIDEVMKHYPQGYHGVDKEGRPVYIERLGQIDANKLLQVTTMDRYVKYHVKEFEKTFKVKFPSCSVAANKHIDQSTTILDVQGVGLKNFSKSARELLQRLCKIDNENYPETLNRMFIINAGSGFRLLWSTVKSFLDPKTTAKIHVLGNKYHSKLLEVIDASELPEFFGGACTCEDKGGCMRSDKGPWNDPEVLKIAINREAKCSPISEDEHKHVDQGRSTSGFESLERIKKKTDEDNVYEKQIATIDKSMDMAWLAKTQKAENFPISKGLECYVRKGAPKKGDGLLVGGVMAFVMGIVAMVRLSKDVPRKLTEAALYGNSVCYEESTKSKQNQGQFAAPVSSSEYMLMVKRMAELEDKCMFLDLKPAHVESEKEEKLQAALNRVQVLEQELTETKKALEEALVSQKEILAYIEKKKKKKKLFFGF</sequence>
<proteinExistence type="evidence at transcript level"/>
<dbReference type="EMBL" id="AJ616026">
    <property type="protein sequence ID" value="CAE82296.1"/>
    <property type="status" value="ALT_FRAME"/>
    <property type="molecule type" value="mRNA"/>
</dbReference>
<dbReference type="EMBL" id="AJ616027">
    <property type="protein sequence ID" value="CAE82297.1"/>
    <property type="status" value="ALT_SEQ"/>
    <property type="molecule type" value="Genomic_DNA"/>
</dbReference>
<dbReference type="EMBL" id="AL023094">
    <property type="protein sequence ID" value="CAA18837.1"/>
    <property type="status" value="ALT_SEQ"/>
    <property type="molecule type" value="Genomic_DNA"/>
</dbReference>
<dbReference type="EMBL" id="AL161585">
    <property type="protein sequence ID" value="CAB80175.1"/>
    <property type="status" value="ALT_SEQ"/>
    <property type="molecule type" value="Genomic_DNA"/>
</dbReference>
<dbReference type="EMBL" id="CP002687">
    <property type="protein sequence ID" value="AEE86395.1"/>
    <property type="molecule type" value="Genomic_DNA"/>
</dbReference>
<dbReference type="EMBL" id="CP002687">
    <property type="protein sequence ID" value="ANM66125.1"/>
    <property type="molecule type" value="Genomic_DNA"/>
</dbReference>
<dbReference type="PIR" id="T05278">
    <property type="entry name" value="T05278"/>
</dbReference>
<dbReference type="RefSeq" id="NP_001328041.1">
    <property type="nucleotide sequence ID" value="NM_001342293.1"/>
</dbReference>
<dbReference type="RefSeq" id="NP_195184.2">
    <property type="nucleotide sequence ID" value="NM_119624.3"/>
</dbReference>
<dbReference type="SMR" id="F4JLE5"/>
<dbReference type="FunCoup" id="F4JLE5">
    <property type="interactions" value="684"/>
</dbReference>
<dbReference type="STRING" id="3702.F4JLE5"/>
<dbReference type="iPTMnet" id="F4JLE5"/>
<dbReference type="PaxDb" id="3702-AT4G34580.1"/>
<dbReference type="EnsemblPlants" id="AT4G34580.1">
    <property type="protein sequence ID" value="AT4G34580.1"/>
    <property type="gene ID" value="AT4G34580"/>
</dbReference>
<dbReference type="EnsemblPlants" id="AT4G34580.2">
    <property type="protein sequence ID" value="AT4G34580.2"/>
    <property type="gene ID" value="AT4G34580"/>
</dbReference>
<dbReference type="GeneID" id="829610"/>
<dbReference type="Gramene" id="AT4G34580.1">
    <property type="protein sequence ID" value="AT4G34580.1"/>
    <property type="gene ID" value="AT4G34580"/>
</dbReference>
<dbReference type="Gramene" id="AT4G34580.2">
    <property type="protein sequence ID" value="AT4G34580.2"/>
    <property type="gene ID" value="AT4G34580"/>
</dbReference>
<dbReference type="KEGG" id="ath:AT4G34580"/>
<dbReference type="Araport" id="AT4G34580"/>
<dbReference type="TAIR" id="AT4G34580">
    <property type="gene designation" value="COW1"/>
</dbReference>
<dbReference type="eggNOG" id="KOG1471">
    <property type="taxonomic scope" value="Eukaryota"/>
</dbReference>
<dbReference type="HOGENOM" id="CLU_014001_11_1_1"/>
<dbReference type="InParanoid" id="F4JLE5"/>
<dbReference type="OMA" id="CYEESTK"/>
<dbReference type="OrthoDB" id="1434354at2759"/>
<dbReference type="PRO" id="PR:F4JLE5"/>
<dbReference type="Proteomes" id="UP000006548">
    <property type="component" value="Chromosome 4"/>
</dbReference>
<dbReference type="ExpressionAtlas" id="F4JLE5">
    <property type="expression patterns" value="baseline and differential"/>
</dbReference>
<dbReference type="GO" id="GO:0000139">
    <property type="term" value="C:Golgi membrane"/>
    <property type="evidence" value="ECO:0007669"/>
    <property type="project" value="UniProtKB-SubCell"/>
</dbReference>
<dbReference type="GO" id="GO:0005886">
    <property type="term" value="C:plasma membrane"/>
    <property type="evidence" value="ECO:0000314"/>
    <property type="project" value="UniProtKB"/>
</dbReference>
<dbReference type="GO" id="GO:0035619">
    <property type="term" value="C:root hair tip"/>
    <property type="evidence" value="ECO:0000314"/>
    <property type="project" value="UniProtKB"/>
</dbReference>
<dbReference type="GO" id="GO:0009932">
    <property type="term" value="P:cell tip growth"/>
    <property type="evidence" value="ECO:0000315"/>
    <property type="project" value="TAIR"/>
</dbReference>
<dbReference type="GO" id="GO:0015031">
    <property type="term" value="P:protein transport"/>
    <property type="evidence" value="ECO:0007669"/>
    <property type="project" value="UniProtKB-KW"/>
</dbReference>
<dbReference type="GO" id="GO:0010053">
    <property type="term" value="P:root epidermal cell differentiation"/>
    <property type="evidence" value="ECO:0000315"/>
    <property type="project" value="TAIR"/>
</dbReference>
<dbReference type="GO" id="GO:0048768">
    <property type="term" value="P:root hair cell tip growth"/>
    <property type="evidence" value="ECO:0000315"/>
    <property type="project" value="UniProtKB"/>
</dbReference>
<dbReference type="GO" id="GO:0048767">
    <property type="term" value="P:root hair elongation"/>
    <property type="evidence" value="ECO:0000315"/>
    <property type="project" value="UniProtKB"/>
</dbReference>
<dbReference type="CDD" id="cd00170">
    <property type="entry name" value="SEC14"/>
    <property type="match status" value="1"/>
</dbReference>
<dbReference type="FunFam" id="1.10.8.20:FF:000006">
    <property type="entry name" value="Phosphatidylinositol/phosphatidylcholine transfer protein SFH3"/>
    <property type="match status" value="1"/>
</dbReference>
<dbReference type="FunFam" id="3.40.525.10:FF:000011">
    <property type="entry name" value="SEC14 cytosolic factor"/>
    <property type="match status" value="1"/>
</dbReference>
<dbReference type="Gene3D" id="3.40.525.10">
    <property type="entry name" value="CRAL-TRIO lipid binding domain"/>
    <property type="match status" value="1"/>
</dbReference>
<dbReference type="Gene3D" id="1.10.8.20">
    <property type="entry name" value="N-terminal domain of phosphatidylinositol transfer protein sec14p"/>
    <property type="match status" value="1"/>
</dbReference>
<dbReference type="InterPro" id="IPR001251">
    <property type="entry name" value="CRAL-TRIO_dom"/>
</dbReference>
<dbReference type="InterPro" id="IPR036865">
    <property type="entry name" value="CRAL-TRIO_dom_sf"/>
</dbReference>
<dbReference type="InterPro" id="IPR011074">
    <property type="entry name" value="CRAL/TRIO_N_dom"/>
</dbReference>
<dbReference type="InterPro" id="IPR036273">
    <property type="entry name" value="CRAL/TRIO_N_dom_sf"/>
</dbReference>
<dbReference type="InterPro" id="IPR051026">
    <property type="entry name" value="PI/PC_transfer"/>
</dbReference>
<dbReference type="PANTHER" id="PTHR45657">
    <property type="entry name" value="CRAL-TRIO DOMAIN-CONTAINING PROTEIN YKL091C-RELATED"/>
    <property type="match status" value="1"/>
</dbReference>
<dbReference type="PANTHER" id="PTHR45657:SF39">
    <property type="entry name" value="PHOSPHATIDYLINOSITOL_PHOSPHATIDYLCHOLINE TRANSFER PROTEIN SFH1-RELATED"/>
    <property type="match status" value="1"/>
</dbReference>
<dbReference type="Pfam" id="PF00650">
    <property type="entry name" value="CRAL_TRIO"/>
    <property type="match status" value="1"/>
</dbReference>
<dbReference type="Pfam" id="PF03765">
    <property type="entry name" value="CRAL_TRIO_N"/>
    <property type="match status" value="1"/>
</dbReference>
<dbReference type="PRINTS" id="PR00180">
    <property type="entry name" value="CRETINALDHBP"/>
</dbReference>
<dbReference type="SMART" id="SM01100">
    <property type="entry name" value="CRAL_TRIO_N"/>
    <property type="match status" value="1"/>
</dbReference>
<dbReference type="SMART" id="SM00516">
    <property type="entry name" value="SEC14"/>
    <property type="match status" value="1"/>
</dbReference>
<dbReference type="SUPFAM" id="SSF52087">
    <property type="entry name" value="CRAL/TRIO domain"/>
    <property type="match status" value="1"/>
</dbReference>
<dbReference type="SUPFAM" id="SSF46938">
    <property type="entry name" value="CRAL/TRIO N-terminal domain"/>
    <property type="match status" value="1"/>
</dbReference>
<dbReference type="PROSITE" id="PS50191">
    <property type="entry name" value="CRAL_TRIO"/>
    <property type="match status" value="1"/>
</dbReference>